<proteinExistence type="inferred from homology"/>
<reference key="1">
    <citation type="journal article" date="2002" name="Nucleic Acids Res.">
        <title>Genome sequence of Oceanobacillus iheyensis isolated from the Iheya Ridge and its unexpected adaptive capabilities to extreme environments.</title>
        <authorList>
            <person name="Takami H."/>
            <person name="Takaki Y."/>
            <person name="Uchiyama I."/>
        </authorList>
    </citation>
    <scope>NUCLEOTIDE SEQUENCE [LARGE SCALE GENOMIC DNA]</scope>
    <source>
        <strain>DSM 14371 / CIP 107618 / JCM 11309 / KCTC 3954 / HTE831</strain>
    </source>
</reference>
<keyword id="KW-0238">DNA-binding</keyword>
<keyword id="KW-0269">Exonuclease</keyword>
<keyword id="KW-0378">Hydrolase</keyword>
<keyword id="KW-0540">Nuclease</keyword>
<keyword id="KW-1185">Reference proteome</keyword>
<sequence length="317" mass="35933">MKNGIAFRTIGEEFDGFLLIKESTRGTTSNGKPFLTLILRDASGEIEAKLWDATKDDEETLIPEQIIQVTGEINQFRGKHQLKILSIRLSQPMDNVQVTDFLGKAPMEKEELAEKLTEAIFEMENPKIQRLVRAFIKKYQEELLTYPAATKNHHEFASGLAYHVVSMLAIGKELHKLYPEINRDLLYAGIILHDIGKIKELSGVVSTTYTLEGKMLGHIPMMVEEIGLMANELQIEGEEVLILKHLVLSHHGKAEWGSPTPPLVREAELLHLIDLIDAKMNMLGRALEKIQPGEFTERLFAMDNRAFYKPNFEENEG</sequence>
<name>YHAM_OCEIH</name>
<feature type="chain" id="PRO_0000109866" description="3'-5' exoribonuclease YhaM">
    <location>
        <begin position="1"/>
        <end position="317"/>
    </location>
</feature>
<feature type="domain" description="HD" evidence="2">
    <location>
        <begin position="163"/>
        <end position="279"/>
    </location>
</feature>
<feature type="DNA-binding region" description="OB">
    <location>
        <begin position="17"/>
        <end position="90"/>
    </location>
</feature>
<dbReference type="EC" id="3.1.-.-" evidence="1"/>
<dbReference type="EMBL" id="BA000028">
    <property type="protein sequence ID" value="BAC13102.1"/>
    <property type="molecule type" value="Genomic_DNA"/>
</dbReference>
<dbReference type="RefSeq" id="WP_011065547.1">
    <property type="nucleotide sequence ID" value="NC_004193.1"/>
</dbReference>
<dbReference type="SMR" id="Q8CUG1"/>
<dbReference type="STRING" id="221109.gene:10733385"/>
<dbReference type="KEGG" id="oih:OB1146"/>
<dbReference type="eggNOG" id="COG3481">
    <property type="taxonomic scope" value="Bacteria"/>
</dbReference>
<dbReference type="HOGENOM" id="CLU_056349_2_0_9"/>
<dbReference type="OrthoDB" id="9778453at2"/>
<dbReference type="PhylomeDB" id="Q8CUG1"/>
<dbReference type="Proteomes" id="UP000000822">
    <property type="component" value="Chromosome"/>
</dbReference>
<dbReference type="GO" id="GO:0000175">
    <property type="term" value="F:3'-5'-RNA exonuclease activity"/>
    <property type="evidence" value="ECO:0007669"/>
    <property type="project" value="UniProtKB-UniRule"/>
</dbReference>
<dbReference type="GO" id="GO:0003677">
    <property type="term" value="F:DNA binding"/>
    <property type="evidence" value="ECO:0007669"/>
    <property type="project" value="UniProtKB-KW"/>
</dbReference>
<dbReference type="GO" id="GO:0031125">
    <property type="term" value="P:rRNA 3'-end processing"/>
    <property type="evidence" value="ECO:0007669"/>
    <property type="project" value="TreeGrafter"/>
</dbReference>
<dbReference type="CDD" id="cd00077">
    <property type="entry name" value="HDc"/>
    <property type="match status" value="1"/>
</dbReference>
<dbReference type="CDD" id="cd04492">
    <property type="entry name" value="YhaM_OBF_like"/>
    <property type="match status" value="1"/>
</dbReference>
<dbReference type="FunFam" id="1.10.3210.10:FF:000008">
    <property type="entry name" value="3'-5' exoribonuclease YhaM"/>
    <property type="match status" value="1"/>
</dbReference>
<dbReference type="Gene3D" id="1.10.3210.10">
    <property type="entry name" value="Hypothetical protein af1432"/>
    <property type="match status" value="1"/>
</dbReference>
<dbReference type="Gene3D" id="2.40.50.140">
    <property type="entry name" value="Nucleic acid-binding proteins"/>
    <property type="match status" value="1"/>
</dbReference>
<dbReference type="HAMAP" id="MF_01427">
    <property type="entry name" value="3_5_Exoribonuc_YhaM"/>
    <property type="match status" value="1"/>
</dbReference>
<dbReference type="InterPro" id="IPR020873">
    <property type="entry name" value="3'-5'_exoribonuclease_YhaM"/>
</dbReference>
<dbReference type="InterPro" id="IPR003607">
    <property type="entry name" value="HD/PDEase_dom"/>
</dbReference>
<dbReference type="InterPro" id="IPR006674">
    <property type="entry name" value="HD_domain"/>
</dbReference>
<dbReference type="InterPro" id="IPR012340">
    <property type="entry name" value="NA-bd_OB-fold"/>
</dbReference>
<dbReference type="InterPro" id="IPR004365">
    <property type="entry name" value="NA-bd_OB_tRNA"/>
</dbReference>
<dbReference type="InterPro" id="IPR050798">
    <property type="entry name" value="YhaM_exoribonuc/phosphodiest"/>
</dbReference>
<dbReference type="NCBIfam" id="NF010007">
    <property type="entry name" value="PRK13480.1"/>
    <property type="match status" value="1"/>
</dbReference>
<dbReference type="PANTHER" id="PTHR37294">
    <property type="entry name" value="3'-5' EXORIBONUCLEASE YHAM"/>
    <property type="match status" value="1"/>
</dbReference>
<dbReference type="PANTHER" id="PTHR37294:SF1">
    <property type="entry name" value="3'-5' EXORIBONUCLEASE YHAM"/>
    <property type="match status" value="1"/>
</dbReference>
<dbReference type="Pfam" id="PF01966">
    <property type="entry name" value="HD"/>
    <property type="match status" value="1"/>
</dbReference>
<dbReference type="Pfam" id="PF01336">
    <property type="entry name" value="tRNA_anti-codon"/>
    <property type="match status" value="1"/>
</dbReference>
<dbReference type="SMART" id="SM00471">
    <property type="entry name" value="HDc"/>
    <property type="match status" value="1"/>
</dbReference>
<dbReference type="SUPFAM" id="SSF109604">
    <property type="entry name" value="HD-domain/PDEase-like"/>
    <property type="match status" value="1"/>
</dbReference>
<dbReference type="SUPFAM" id="SSF50249">
    <property type="entry name" value="Nucleic acid-binding proteins"/>
    <property type="match status" value="1"/>
</dbReference>
<dbReference type="PROSITE" id="PS51831">
    <property type="entry name" value="HD"/>
    <property type="match status" value="1"/>
</dbReference>
<accession>Q8CUG1</accession>
<evidence type="ECO:0000255" key="1">
    <source>
        <dbReference type="HAMAP-Rule" id="MF_01427"/>
    </source>
</evidence>
<evidence type="ECO:0000255" key="2">
    <source>
        <dbReference type="PROSITE-ProRule" id="PRU01175"/>
    </source>
</evidence>
<gene>
    <name evidence="1" type="primary">yhaM</name>
    <name type="ordered locus">OB1146</name>
</gene>
<comment type="function">
    <text evidence="1">Shows a 3'-5' exoribonuclease activity.</text>
</comment>
<comment type="similarity">
    <text evidence="1">Belongs to the YhaM family.</text>
</comment>
<protein>
    <recommendedName>
        <fullName evidence="1">3'-5' exoribonuclease YhaM</fullName>
        <ecNumber evidence="1">3.1.-.-</ecNumber>
    </recommendedName>
</protein>
<organism>
    <name type="scientific">Oceanobacillus iheyensis (strain DSM 14371 / CIP 107618 / JCM 11309 / KCTC 3954 / HTE831)</name>
    <dbReference type="NCBI Taxonomy" id="221109"/>
    <lineage>
        <taxon>Bacteria</taxon>
        <taxon>Bacillati</taxon>
        <taxon>Bacillota</taxon>
        <taxon>Bacilli</taxon>
        <taxon>Bacillales</taxon>
        <taxon>Bacillaceae</taxon>
        <taxon>Oceanobacillus</taxon>
    </lineage>
</organism>